<feature type="chain" id="PRO_1000081739" description="ATP synthase epsilon chain">
    <location>
        <begin position="1"/>
        <end position="148"/>
    </location>
</feature>
<organism>
    <name type="scientific">Paracoccus denitrificans (strain Pd 1222)</name>
    <dbReference type="NCBI Taxonomy" id="318586"/>
    <lineage>
        <taxon>Bacteria</taxon>
        <taxon>Pseudomonadati</taxon>
        <taxon>Pseudomonadota</taxon>
        <taxon>Alphaproteobacteria</taxon>
        <taxon>Rhodobacterales</taxon>
        <taxon>Paracoccaceae</taxon>
        <taxon>Paracoccus</taxon>
    </lineage>
</organism>
<sequence length="148" mass="15824">MADTMQFDLVSPERNLVSVPVREVRLPGADGDLTAMPGHAPAIVNLRPGLVTVVAGDGSETEFAVTGGFAEINNESVTLLAERGHPRAEMTQEVFNEMMAQARRRVEAAKERESAGEELVAAAVKLLADMEALGTHIGLDPNHANFPH</sequence>
<gene>
    <name evidence="1" type="primary">atpC</name>
    <name type="ordered locus">Pden_3819</name>
</gene>
<evidence type="ECO:0000255" key="1">
    <source>
        <dbReference type="HAMAP-Rule" id="MF_00530"/>
    </source>
</evidence>
<reference key="1">
    <citation type="submission" date="2006-12" db="EMBL/GenBank/DDBJ databases">
        <title>Complete sequence of chromosome 2 of Paracoccus denitrificans PD1222.</title>
        <authorList>
            <person name="Copeland A."/>
            <person name="Lucas S."/>
            <person name="Lapidus A."/>
            <person name="Barry K."/>
            <person name="Detter J.C."/>
            <person name="Glavina del Rio T."/>
            <person name="Hammon N."/>
            <person name="Israni S."/>
            <person name="Dalin E."/>
            <person name="Tice H."/>
            <person name="Pitluck S."/>
            <person name="Munk A.C."/>
            <person name="Brettin T."/>
            <person name="Bruce D."/>
            <person name="Han C."/>
            <person name="Tapia R."/>
            <person name="Gilna P."/>
            <person name="Schmutz J."/>
            <person name="Larimer F."/>
            <person name="Land M."/>
            <person name="Hauser L."/>
            <person name="Kyrpides N."/>
            <person name="Lykidis A."/>
            <person name="Spiro S."/>
            <person name="Richardson D.J."/>
            <person name="Moir J.W.B."/>
            <person name="Ferguson S.J."/>
            <person name="van Spanning R.J.M."/>
            <person name="Richardson P."/>
        </authorList>
    </citation>
    <scope>NUCLEOTIDE SEQUENCE [LARGE SCALE GENOMIC DNA]</scope>
    <source>
        <strain>Pd 1222</strain>
    </source>
</reference>
<name>ATPE_PARDP</name>
<comment type="function">
    <text evidence="1">Produces ATP from ADP in the presence of a proton gradient across the membrane.</text>
</comment>
<comment type="subunit">
    <text evidence="1">F-type ATPases have 2 components, CF(1) - the catalytic core - and CF(0) - the membrane proton channel. CF(1) has five subunits: alpha(3), beta(3), gamma(1), delta(1), epsilon(1). CF(0) has three main subunits: a, b and c.</text>
</comment>
<comment type="subcellular location">
    <subcellularLocation>
        <location evidence="1">Cell inner membrane</location>
        <topology evidence="1">Peripheral membrane protein</topology>
    </subcellularLocation>
</comment>
<comment type="similarity">
    <text evidence="1">Belongs to the ATPase epsilon chain family.</text>
</comment>
<protein>
    <recommendedName>
        <fullName evidence="1">ATP synthase epsilon chain</fullName>
    </recommendedName>
    <alternativeName>
        <fullName evidence="1">ATP synthase F1 sector epsilon subunit</fullName>
    </alternativeName>
    <alternativeName>
        <fullName evidence="1">F-ATPase epsilon subunit</fullName>
    </alternativeName>
</protein>
<accession>A1B8P1</accession>
<dbReference type="EMBL" id="CP000490">
    <property type="protein sequence ID" value="ABL71885.1"/>
    <property type="molecule type" value="Genomic_DNA"/>
</dbReference>
<dbReference type="RefSeq" id="WP_011750054.1">
    <property type="nucleotide sequence ID" value="NC_008687.1"/>
</dbReference>
<dbReference type="PDB" id="5DN6">
    <property type="method" value="X-ray"/>
    <property type="resolution" value="3.98 A"/>
    <property type="chains" value="I=1-148"/>
</dbReference>
<dbReference type="PDBsum" id="5DN6"/>
<dbReference type="SMR" id="A1B8P1"/>
<dbReference type="STRING" id="318586.Pden_3819"/>
<dbReference type="TCDB" id="3.A.2.1.7">
    <property type="family name" value="the h+- or na+-translocating f-type, v-type and a-type atpase (f-atpase) superfamily"/>
</dbReference>
<dbReference type="EnsemblBacteria" id="ABL71885">
    <property type="protein sequence ID" value="ABL71885"/>
    <property type="gene ID" value="Pden_3819"/>
</dbReference>
<dbReference type="GeneID" id="93453481"/>
<dbReference type="KEGG" id="pde:Pden_3819"/>
<dbReference type="eggNOG" id="COG0355">
    <property type="taxonomic scope" value="Bacteria"/>
</dbReference>
<dbReference type="HOGENOM" id="CLU_084338_2_1_5"/>
<dbReference type="OrthoDB" id="9799969at2"/>
<dbReference type="Proteomes" id="UP000000361">
    <property type="component" value="Chromosome 2"/>
</dbReference>
<dbReference type="GO" id="GO:0005886">
    <property type="term" value="C:plasma membrane"/>
    <property type="evidence" value="ECO:0007669"/>
    <property type="project" value="UniProtKB-SubCell"/>
</dbReference>
<dbReference type="GO" id="GO:0045259">
    <property type="term" value="C:proton-transporting ATP synthase complex"/>
    <property type="evidence" value="ECO:0007669"/>
    <property type="project" value="UniProtKB-KW"/>
</dbReference>
<dbReference type="GO" id="GO:0005524">
    <property type="term" value="F:ATP binding"/>
    <property type="evidence" value="ECO:0007669"/>
    <property type="project" value="UniProtKB-UniRule"/>
</dbReference>
<dbReference type="GO" id="GO:0046933">
    <property type="term" value="F:proton-transporting ATP synthase activity, rotational mechanism"/>
    <property type="evidence" value="ECO:0007669"/>
    <property type="project" value="UniProtKB-UniRule"/>
</dbReference>
<dbReference type="CDD" id="cd12152">
    <property type="entry name" value="F1-ATPase_delta"/>
    <property type="match status" value="1"/>
</dbReference>
<dbReference type="Gene3D" id="2.60.15.10">
    <property type="entry name" value="F0F1 ATP synthase delta/epsilon subunit, N-terminal"/>
    <property type="match status" value="1"/>
</dbReference>
<dbReference type="HAMAP" id="MF_00530">
    <property type="entry name" value="ATP_synth_epsil_bac"/>
    <property type="match status" value="1"/>
</dbReference>
<dbReference type="InterPro" id="IPR001469">
    <property type="entry name" value="ATP_synth_F1_dsu/esu"/>
</dbReference>
<dbReference type="InterPro" id="IPR020546">
    <property type="entry name" value="ATP_synth_F1_dsu/esu_N"/>
</dbReference>
<dbReference type="InterPro" id="IPR036771">
    <property type="entry name" value="ATPsynth_dsu/esu_N"/>
</dbReference>
<dbReference type="NCBIfam" id="TIGR01216">
    <property type="entry name" value="ATP_synt_epsi"/>
    <property type="match status" value="1"/>
</dbReference>
<dbReference type="NCBIfam" id="NF009978">
    <property type="entry name" value="PRK13443.1"/>
    <property type="match status" value="1"/>
</dbReference>
<dbReference type="PANTHER" id="PTHR13822">
    <property type="entry name" value="ATP SYNTHASE DELTA/EPSILON CHAIN"/>
    <property type="match status" value="1"/>
</dbReference>
<dbReference type="PANTHER" id="PTHR13822:SF10">
    <property type="entry name" value="ATP SYNTHASE EPSILON CHAIN, CHLOROPLASTIC"/>
    <property type="match status" value="1"/>
</dbReference>
<dbReference type="Pfam" id="PF02823">
    <property type="entry name" value="ATP-synt_DE_N"/>
    <property type="match status" value="1"/>
</dbReference>
<dbReference type="SUPFAM" id="SSF51344">
    <property type="entry name" value="Epsilon subunit of F1F0-ATP synthase N-terminal domain"/>
    <property type="match status" value="1"/>
</dbReference>
<proteinExistence type="evidence at protein level"/>
<keyword id="KW-0002">3D-structure</keyword>
<keyword id="KW-0066">ATP synthesis</keyword>
<keyword id="KW-0997">Cell inner membrane</keyword>
<keyword id="KW-1003">Cell membrane</keyword>
<keyword id="KW-0139">CF(1)</keyword>
<keyword id="KW-0375">Hydrogen ion transport</keyword>
<keyword id="KW-0406">Ion transport</keyword>
<keyword id="KW-0472">Membrane</keyword>
<keyword id="KW-1185">Reference proteome</keyword>
<keyword id="KW-0813">Transport</keyword>